<name>IDI1_BOVIN</name>
<reference key="1">
    <citation type="journal article" date="2009" name="Science">
        <title>The genome sequence of taurine cattle: a window to ruminant biology and evolution.</title>
        <authorList>
            <consortium name="The bovine genome sequencing and analysis consortium"/>
        </authorList>
    </citation>
    <scope>NUCLEOTIDE SEQUENCE [LARGE SCALE GENOMIC DNA]</scope>
    <source>
        <strain>Hereford</strain>
    </source>
</reference>
<reference key="2">
    <citation type="submission" date="2006-05" db="EMBL/GenBank/DDBJ databases">
        <authorList>
            <consortium name="NIH - Mammalian Gene Collection (MGC) project"/>
        </authorList>
    </citation>
    <scope>NUCLEOTIDE SEQUENCE [LARGE SCALE MRNA] (ISOFORM 2)</scope>
    <source>
        <strain>Hereford</strain>
        <tissue>Ascending colon</tissue>
    </source>
</reference>
<proteinExistence type="evidence at transcript level"/>
<protein>
    <recommendedName>
        <fullName>Isopentenyl-diphosphate Delta-isomerase 1</fullName>
        <ecNumber evidence="3">5.3.3.2</ecNumber>
    </recommendedName>
    <alternativeName>
        <fullName>Isopentenyl pyrophosphate isomerase 1</fullName>
        <shortName>IPP isomerase 1</shortName>
        <shortName>IPPI1</shortName>
    </alternativeName>
</protein>
<gene>
    <name type="primary">IDI1</name>
</gene>
<accession>Q1LZ95</accession>
<evidence type="ECO:0000250" key="1"/>
<evidence type="ECO:0000250" key="2">
    <source>
        <dbReference type="UniProtKB" id="O35586"/>
    </source>
</evidence>
<evidence type="ECO:0000250" key="3">
    <source>
        <dbReference type="UniProtKB" id="Q13907"/>
    </source>
</evidence>
<evidence type="ECO:0000255" key="4">
    <source>
        <dbReference type="PROSITE-ProRule" id="PRU00794"/>
    </source>
</evidence>
<evidence type="ECO:0000303" key="5">
    <source ref="2"/>
</evidence>
<evidence type="ECO:0000305" key="6"/>
<keyword id="KW-0007">Acetylation</keyword>
<keyword id="KW-0025">Alternative splicing</keyword>
<keyword id="KW-0152">Cholesterol biosynthesis</keyword>
<keyword id="KW-0153">Cholesterol metabolism</keyword>
<keyword id="KW-0413">Isomerase</keyword>
<keyword id="KW-0414">Isoprene biosynthesis</keyword>
<keyword id="KW-0444">Lipid biosynthesis</keyword>
<keyword id="KW-0443">Lipid metabolism</keyword>
<keyword id="KW-0460">Magnesium</keyword>
<keyword id="KW-0479">Metal-binding</keyword>
<keyword id="KW-0576">Peroxisome</keyword>
<keyword id="KW-1185">Reference proteome</keyword>
<keyword id="KW-0752">Steroid biosynthesis</keyword>
<keyword id="KW-0753">Steroid metabolism</keyword>
<keyword id="KW-0756">Sterol biosynthesis</keyword>
<keyword id="KW-1207">Sterol metabolism</keyword>
<sequence length="227" mass="26467">MPEVSTDDLDERQVQLMAEMCILVDENDRRIGAETKKNCHLNENIERGLLHRAFSVFLFNTENKLLLQQRSDAKITFPGCFTNTCCSHPLSNPSELEENDAIGVRRAAQRRLKAELGIPMEEVPPEEINYLTRIHYKAQSDSIWGEHEIDYILLVKKNVTLNPDPNEIKSYCYVTKEELEELIGKAAHGEIKITPWFQIIADTFLFKWWDNLNRLNLFVDHEKIHRM</sequence>
<organism>
    <name type="scientific">Bos taurus</name>
    <name type="common">Bovine</name>
    <dbReference type="NCBI Taxonomy" id="9913"/>
    <lineage>
        <taxon>Eukaryota</taxon>
        <taxon>Metazoa</taxon>
        <taxon>Chordata</taxon>
        <taxon>Craniata</taxon>
        <taxon>Vertebrata</taxon>
        <taxon>Euteleostomi</taxon>
        <taxon>Mammalia</taxon>
        <taxon>Eutheria</taxon>
        <taxon>Laurasiatheria</taxon>
        <taxon>Artiodactyla</taxon>
        <taxon>Ruminantia</taxon>
        <taxon>Pecora</taxon>
        <taxon>Bovidae</taxon>
        <taxon>Bovinae</taxon>
        <taxon>Bos</taxon>
    </lineage>
</organism>
<dbReference type="EC" id="5.3.3.2" evidence="3"/>
<dbReference type="EMBL" id="AAFC03067960">
    <property type="status" value="NOT_ANNOTATED_CDS"/>
    <property type="molecule type" value="Genomic_DNA"/>
</dbReference>
<dbReference type="EMBL" id="BC116133">
    <property type="protein sequence ID" value="AAI16134.1"/>
    <property type="molecule type" value="mRNA"/>
</dbReference>
<dbReference type="RefSeq" id="NP_001069127.1">
    <property type="nucleotide sequence ID" value="NM_001075659.1"/>
</dbReference>
<dbReference type="SMR" id="Q1LZ95"/>
<dbReference type="FunCoup" id="Q1LZ95">
    <property type="interactions" value="2269"/>
</dbReference>
<dbReference type="STRING" id="9913.ENSBTAP00000005323"/>
<dbReference type="PaxDb" id="9913-ENSBTAP00000005323"/>
<dbReference type="PeptideAtlas" id="Q1LZ95"/>
<dbReference type="GeneID" id="514293"/>
<dbReference type="KEGG" id="bta:514293"/>
<dbReference type="CTD" id="3422"/>
<dbReference type="eggNOG" id="KOG0142">
    <property type="taxonomic scope" value="Eukaryota"/>
</dbReference>
<dbReference type="HOGENOM" id="CLU_060552_0_0_1"/>
<dbReference type="InParanoid" id="Q1LZ95"/>
<dbReference type="OrthoDB" id="510307at2759"/>
<dbReference type="TreeFam" id="TF300129"/>
<dbReference type="UniPathway" id="UPA00059">
    <property type="reaction ID" value="UER00104"/>
</dbReference>
<dbReference type="Proteomes" id="UP000009136">
    <property type="component" value="Unplaced"/>
</dbReference>
<dbReference type="GO" id="GO:0005737">
    <property type="term" value="C:cytoplasm"/>
    <property type="evidence" value="ECO:0000318"/>
    <property type="project" value="GO_Central"/>
</dbReference>
<dbReference type="GO" id="GO:0005777">
    <property type="term" value="C:peroxisome"/>
    <property type="evidence" value="ECO:0007669"/>
    <property type="project" value="UniProtKB-SubCell"/>
</dbReference>
<dbReference type="GO" id="GO:0004452">
    <property type="term" value="F:isopentenyl-diphosphate delta-isomerase activity"/>
    <property type="evidence" value="ECO:0000318"/>
    <property type="project" value="GO_Central"/>
</dbReference>
<dbReference type="GO" id="GO:0046872">
    <property type="term" value="F:metal ion binding"/>
    <property type="evidence" value="ECO:0007669"/>
    <property type="project" value="UniProtKB-KW"/>
</dbReference>
<dbReference type="GO" id="GO:0006695">
    <property type="term" value="P:cholesterol biosynthetic process"/>
    <property type="evidence" value="ECO:0007669"/>
    <property type="project" value="UniProtKB-KW"/>
</dbReference>
<dbReference type="GO" id="GO:0050992">
    <property type="term" value="P:dimethylallyl diphosphate biosynthetic process"/>
    <property type="evidence" value="ECO:0007669"/>
    <property type="project" value="UniProtKB-UniPathway"/>
</dbReference>
<dbReference type="GO" id="GO:0009240">
    <property type="term" value="P:isopentenyl diphosphate biosynthetic process"/>
    <property type="evidence" value="ECO:0000318"/>
    <property type="project" value="GO_Central"/>
</dbReference>
<dbReference type="CDD" id="cd02885">
    <property type="entry name" value="NUDIX_IPP_Isomerase"/>
    <property type="match status" value="1"/>
</dbReference>
<dbReference type="FunFam" id="3.90.79.10:FF:000012">
    <property type="entry name" value="Isopentenyl-diphosphate Delta-isomerase 1"/>
    <property type="match status" value="1"/>
</dbReference>
<dbReference type="Gene3D" id="3.90.79.10">
    <property type="entry name" value="Nucleoside Triphosphate Pyrophosphohydrolase"/>
    <property type="match status" value="1"/>
</dbReference>
<dbReference type="InterPro" id="IPR011876">
    <property type="entry name" value="IsopentenylPP_isomerase_typ1"/>
</dbReference>
<dbReference type="InterPro" id="IPR015797">
    <property type="entry name" value="NUDIX_hydrolase-like_dom_sf"/>
</dbReference>
<dbReference type="InterPro" id="IPR000086">
    <property type="entry name" value="NUDIX_hydrolase_dom"/>
</dbReference>
<dbReference type="NCBIfam" id="TIGR02150">
    <property type="entry name" value="IPP_isom_1"/>
    <property type="match status" value="1"/>
</dbReference>
<dbReference type="PANTHER" id="PTHR10885">
    <property type="entry name" value="ISOPENTENYL-DIPHOSPHATE DELTA-ISOMERASE"/>
    <property type="match status" value="1"/>
</dbReference>
<dbReference type="PANTHER" id="PTHR10885:SF0">
    <property type="entry name" value="ISOPENTENYL-DIPHOSPHATE DELTA-ISOMERASE"/>
    <property type="match status" value="1"/>
</dbReference>
<dbReference type="Pfam" id="PF00293">
    <property type="entry name" value="NUDIX"/>
    <property type="match status" value="1"/>
</dbReference>
<dbReference type="PIRSF" id="PIRSF018427">
    <property type="entry name" value="Isopntndiph_ism"/>
    <property type="match status" value="1"/>
</dbReference>
<dbReference type="SUPFAM" id="SSF55811">
    <property type="entry name" value="Nudix"/>
    <property type="match status" value="1"/>
</dbReference>
<dbReference type="PROSITE" id="PS51462">
    <property type="entry name" value="NUDIX"/>
    <property type="match status" value="1"/>
</dbReference>
<comment type="function">
    <text evidence="3">Catalyzes the 1,3-allylic rearrangement of the homoallylic substrate isopentenyl (IPP) to its highly electrophilic allylic isomer, dimethylallyl diphosphate (DMAPP).</text>
</comment>
<comment type="catalytic activity">
    <reaction evidence="3">
        <text>isopentenyl diphosphate = dimethylallyl diphosphate</text>
        <dbReference type="Rhea" id="RHEA:23284"/>
        <dbReference type="ChEBI" id="CHEBI:57623"/>
        <dbReference type="ChEBI" id="CHEBI:128769"/>
        <dbReference type="EC" id="5.3.3.2"/>
    </reaction>
</comment>
<comment type="cofactor">
    <cofactor evidence="3">
        <name>Mg(2+)</name>
        <dbReference type="ChEBI" id="CHEBI:18420"/>
    </cofactor>
    <text evidence="3">Binds 1 Mg(2+) ion per subunit.</text>
</comment>
<comment type="pathway">
    <text evidence="3">Isoprenoid biosynthesis; dimethylallyl diphosphate biosynthesis; dimethylallyl diphosphate from isopentenyl diphosphate: step 1/1.</text>
</comment>
<comment type="subunit">
    <text evidence="3">Monomer.</text>
</comment>
<comment type="subcellular location">
    <subcellularLocation>
        <location evidence="2">Peroxisome</location>
    </subcellularLocation>
</comment>
<comment type="alternative products">
    <event type="alternative splicing"/>
    <isoform>
        <id>Q1LZ95-1</id>
        <name>1</name>
        <sequence type="displayed"/>
    </isoform>
    <isoform>
        <id>Q1LZ95-2</id>
        <name>2</name>
        <sequence type="described" ref="VSP_037888"/>
    </isoform>
</comment>
<comment type="similarity">
    <text evidence="6">Belongs to the IPP isomerase type 1 family.</text>
</comment>
<feature type="chain" id="PRO_0000287279" description="Isopentenyl-diphosphate Delta-isomerase 1">
    <location>
        <begin position="1"/>
        <end position="227"/>
    </location>
</feature>
<feature type="domain" description="Nudix hydrolase" evidence="4">
    <location>
        <begin position="49"/>
        <end position="199"/>
    </location>
</feature>
<feature type="active site" description="Proton acceptor" evidence="1">
    <location>
        <position position="86"/>
    </location>
</feature>
<feature type="active site">
    <location>
        <position position="148"/>
    </location>
</feature>
<feature type="binding site" evidence="1">
    <location>
        <position position="36"/>
    </location>
    <ligand>
        <name>substrate</name>
    </ligand>
</feature>
<feature type="binding site" evidence="1">
    <location>
        <position position="40"/>
    </location>
    <ligand>
        <name>Mg(2+)</name>
        <dbReference type="ChEBI" id="CHEBI:18420"/>
    </ligand>
</feature>
<feature type="binding site" evidence="1">
    <location>
        <position position="51"/>
    </location>
    <ligand>
        <name>Mg(2+)</name>
        <dbReference type="ChEBI" id="CHEBI:18420"/>
    </ligand>
</feature>
<feature type="binding site" evidence="1">
    <location>
        <position position="70"/>
    </location>
    <ligand>
        <name>substrate</name>
    </ligand>
</feature>
<feature type="binding site" evidence="1">
    <location>
        <position position="74"/>
    </location>
    <ligand>
        <name>substrate</name>
    </ligand>
</feature>
<feature type="binding site" evidence="1">
    <location>
        <position position="87"/>
    </location>
    <ligand>
        <name>substrate</name>
    </ligand>
</feature>
<feature type="binding site" evidence="1">
    <location>
        <position position="146"/>
    </location>
    <ligand>
        <name>Mg(2+)</name>
        <dbReference type="ChEBI" id="CHEBI:18420"/>
    </ligand>
</feature>
<feature type="binding site" evidence="1">
    <location>
        <position position="148"/>
    </location>
    <ligand>
        <name>Mg(2+)</name>
        <dbReference type="ChEBI" id="CHEBI:18420"/>
    </ligand>
</feature>
<feature type="modified residue" description="N6-acetyllysine" evidence="3">
    <location>
        <position position="176"/>
    </location>
</feature>
<feature type="splice variant" id="VSP_037888" description="In isoform 2." evidence="5">
    <original>M</original>
    <variation>MMWRALAPARAIGRAASGGGARIGGGARALGRSLKDTPPAVQPTVDGSCLRFPGRRGGWAA</variation>
    <location>
        <position position="1"/>
    </location>
</feature>